<feature type="chain" id="PRO_0000121295" description="GTP-binding protein YPTC5">
    <location>
        <begin position="1"/>
        <end position="206"/>
    </location>
</feature>
<feature type="short sequence motif" description="Effector region" evidence="2">
    <location>
        <begin position="37"/>
        <end position="45"/>
    </location>
</feature>
<feature type="binding site" evidence="1">
    <location>
        <begin position="15"/>
        <end position="22"/>
    </location>
    <ligand>
        <name>GTP</name>
        <dbReference type="ChEBI" id="CHEBI:37565"/>
    </ligand>
</feature>
<feature type="binding site" evidence="1">
    <location>
        <begin position="63"/>
        <end position="67"/>
    </location>
    <ligand>
        <name>GTP</name>
        <dbReference type="ChEBI" id="CHEBI:37565"/>
    </ligand>
</feature>
<feature type="binding site" evidence="1">
    <location>
        <begin position="125"/>
        <end position="128"/>
    </location>
    <ligand>
        <name>GTP</name>
        <dbReference type="ChEBI" id="CHEBI:37565"/>
    </ligand>
</feature>
<feature type="lipid moiety-binding region" description="S-geranylgeranyl cysteine" evidence="1">
    <location>
        <position position="205"/>
    </location>
</feature>
<feature type="lipid moiety-binding region" description="S-geranylgeranyl cysteine" evidence="1">
    <location>
        <position position="206"/>
    </location>
</feature>
<name>YPTC5_CHLRE</name>
<keyword id="KW-1003">Cell membrane</keyword>
<keyword id="KW-0342">GTP-binding</keyword>
<keyword id="KW-0449">Lipoprotein</keyword>
<keyword id="KW-0472">Membrane</keyword>
<keyword id="KW-0547">Nucleotide-binding</keyword>
<keyword id="KW-0636">Prenylation</keyword>
<keyword id="KW-0653">Protein transport</keyword>
<keyword id="KW-0813">Transport</keyword>
<accession>Q39573</accession>
<gene>
    <name type="primary">YPTC5</name>
</gene>
<proteinExistence type="inferred from homology"/>
<dbReference type="EMBL" id="U13170">
    <property type="protein sequence ID" value="AAA82728.1"/>
    <property type="molecule type" value="Genomic_DNA"/>
</dbReference>
<dbReference type="PIR" id="JC4107">
    <property type="entry name" value="JC4107"/>
</dbReference>
<dbReference type="RefSeq" id="XP_001691181.1">
    <property type="nucleotide sequence ID" value="XM_001691129.1"/>
</dbReference>
<dbReference type="SMR" id="Q39573"/>
<dbReference type="PaxDb" id="3055-EDP04914"/>
<dbReference type="EnsemblPlants" id="PNW83222">
    <property type="protein sequence ID" value="PNW83222"/>
    <property type="gene ID" value="CHLRE_06g311900v5"/>
</dbReference>
<dbReference type="Gramene" id="PNW83222">
    <property type="protein sequence ID" value="PNW83222"/>
    <property type="gene ID" value="CHLRE_06g311900v5"/>
</dbReference>
<dbReference type="KEGG" id="cre:CHLRE_06g311900v5"/>
<dbReference type="eggNOG" id="KOG0394">
    <property type="taxonomic scope" value="Eukaryota"/>
</dbReference>
<dbReference type="HOGENOM" id="CLU_041217_10_6_1"/>
<dbReference type="OMA" id="GASACQC"/>
<dbReference type="OrthoDB" id="1436450at2759"/>
<dbReference type="GO" id="GO:0005886">
    <property type="term" value="C:plasma membrane"/>
    <property type="evidence" value="ECO:0007669"/>
    <property type="project" value="UniProtKB-SubCell"/>
</dbReference>
<dbReference type="GO" id="GO:0005525">
    <property type="term" value="F:GTP binding"/>
    <property type="evidence" value="ECO:0007669"/>
    <property type="project" value="UniProtKB-KW"/>
</dbReference>
<dbReference type="GO" id="GO:0003924">
    <property type="term" value="F:GTPase activity"/>
    <property type="evidence" value="ECO:0007669"/>
    <property type="project" value="InterPro"/>
</dbReference>
<dbReference type="GO" id="GO:0015031">
    <property type="term" value="P:protein transport"/>
    <property type="evidence" value="ECO:0007669"/>
    <property type="project" value="UniProtKB-KW"/>
</dbReference>
<dbReference type="CDD" id="cd01862">
    <property type="entry name" value="Rab7"/>
    <property type="match status" value="1"/>
</dbReference>
<dbReference type="FunFam" id="3.40.50.300:FF:000295">
    <property type="entry name" value="Ras-related protein Rab7"/>
    <property type="match status" value="1"/>
</dbReference>
<dbReference type="Gene3D" id="3.40.50.300">
    <property type="entry name" value="P-loop containing nucleotide triphosphate hydrolases"/>
    <property type="match status" value="1"/>
</dbReference>
<dbReference type="InterPro" id="IPR027417">
    <property type="entry name" value="P-loop_NTPase"/>
</dbReference>
<dbReference type="InterPro" id="IPR005225">
    <property type="entry name" value="Small_GTP-bd"/>
</dbReference>
<dbReference type="InterPro" id="IPR001806">
    <property type="entry name" value="Small_GTPase"/>
</dbReference>
<dbReference type="NCBIfam" id="TIGR00231">
    <property type="entry name" value="small_GTP"/>
    <property type="match status" value="1"/>
</dbReference>
<dbReference type="PANTHER" id="PTHR47981">
    <property type="entry name" value="RAB FAMILY"/>
    <property type="match status" value="1"/>
</dbReference>
<dbReference type="PANTHER" id="PTHR47981:SF20">
    <property type="entry name" value="RAS-RELATED PROTEIN RAB-7A"/>
    <property type="match status" value="1"/>
</dbReference>
<dbReference type="Pfam" id="PF00071">
    <property type="entry name" value="Ras"/>
    <property type="match status" value="1"/>
</dbReference>
<dbReference type="PRINTS" id="PR00449">
    <property type="entry name" value="RASTRNSFRMNG"/>
</dbReference>
<dbReference type="SMART" id="SM00175">
    <property type="entry name" value="RAB"/>
    <property type="match status" value="1"/>
</dbReference>
<dbReference type="SMART" id="SM00176">
    <property type="entry name" value="RAN"/>
    <property type="match status" value="1"/>
</dbReference>
<dbReference type="SMART" id="SM00173">
    <property type="entry name" value="RAS"/>
    <property type="match status" value="1"/>
</dbReference>
<dbReference type="SMART" id="SM00174">
    <property type="entry name" value="RHO"/>
    <property type="match status" value="1"/>
</dbReference>
<dbReference type="SUPFAM" id="SSF52540">
    <property type="entry name" value="P-loop containing nucleoside triphosphate hydrolases"/>
    <property type="match status" value="1"/>
</dbReference>
<dbReference type="PROSITE" id="PS51419">
    <property type="entry name" value="RAB"/>
    <property type="match status" value="1"/>
</dbReference>
<reference key="1">
    <citation type="journal article" date="1995" name="Gene">
        <title>Analysis of a family of ypt genes and their products from Chlamydomonas reinhardtii.</title>
        <authorList>
            <person name="Dietmaier W."/>
            <person name="Fabry S."/>
            <person name="Huber H."/>
            <person name="Schmitt R."/>
        </authorList>
    </citation>
    <scope>NUCLEOTIDE SEQUENCE [GENOMIC DNA]</scope>
    <source>
        <strain>cw15</strain>
    </source>
</reference>
<evidence type="ECO:0000250" key="1"/>
<evidence type="ECO:0000305" key="2"/>
<protein>
    <recommendedName>
        <fullName>GTP-binding protein YPTC5</fullName>
    </recommendedName>
</protein>
<sequence length="206" mass="23142">MSTKKRRLLKVIILGDSGVGKTSLMNQYVQKKFTKEYKATIGADFLTKEIEVDDKKVTMQIWDTAGQERFQSLGSAFYRGADCCVLVFDVNNAKSFDDLDNWRDEFIIQAGPPDPDNFPFMVLGNKIDENGGSSRQVSEKKAKAWCASKGSIPYFETSAKEDINVEAAFTCITRNALRNEKEEELFMPDAVDMNTTATQRKRAGCC</sequence>
<organism>
    <name type="scientific">Chlamydomonas reinhardtii</name>
    <name type="common">Chlamydomonas smithii</name>
    <dbReference type="NCBI Taxonomy" id="3055"/>
    <lineage>
        <taxon>Eukaryota</taxon>
        <taxon>Viridiplantae</taxon>
        <taxon>Chlorophyta</taxon>
        <taxon>core chlorophytes</taxon>
        <taxon>Chlorophyceae</taxon>
        <taxon>CS clade</taxon>
        <taxon>Chlamydomonadales</taxon>
        <taxon>Chlamydomonadaceae</taxon>
        <taxon>Chlamydomonas</taxon>
    </lineage>
</organism>
<comment type="function">
    <text evidence="1">Protein transport. Probably involved in vesicular traffic (By similarity).</text>
</comment>
<comment type="subcellular location">
    <subcellularLocation>
        <location evidence="2">Cell membrane</location>
        <topology evidence="2">Lipid-anchor</topology>
        <orientation evidence="2">Cytoplasmic side</orientation>
    </subcellularLocation>
</comment>
<comment type="similarity">
    <text evidence="2">Belongs to the small GTPase superfamily. Rab family.</text>
</comment>